<proteinExistence type="evidence at protein level"/>
<comment type="function">
    <text evidence="2 3">Phosphorylates uridine and cytidine to uridine monophosphate and cytidine monophosphate (PubMed:11306702, PubMed:11494055). Does not phosphorylate deoxyribonucleosides or purine ribonucleosides (PubMed:11306702). Can use ATP or GTP as a phosphate donor (PubMed:11306702). Can also phosphorylate cytidine and uridine nucleoside analogs such as 6-azauridine, 5-fluorouridine, 4-thiouridine, 5-bromouridine, N(4)-acetylcytidine, N(4)-benzoylcytidine, 5-fluorocytidine, 2-thiocytidine, 5-methylcytidine, and N(4)-anisoylcytidine (PubMed:11306702).</text>
</comment>
<comment type="catalytic activity">
    <reaction evidence="2 3">
        <text>uridine + ATP = UMP + ADP + H(+)</text>
        <dbReference type="Rhea" id="RHEA:16825"/>
        <dbReference type="ChEBI" id="CHEBI:15378"/>
        <dbReference type="ChEBI" id="CHEBI:16704"/>
        <dbReference type="ChEBI" id="CHEBI:30616"/>
        <dbReference type="ChEBI" id="CHEBI:57865"/>
        <dbReference type="ChEBI" id="CHEBI:456216"/>
        <dbReference type="EC" id="2.7.1.48"/>
    </reaction>
</comment>
<comment type="catalytic activity">
    <reaction evidence="2 3">
        <text>cytidine + ATP = CMP + ADP + H(+)</text>
        <dbReference type="Rhea" id="RHEA:24674"/>
        <dbReference type="ChEBI" id="CHEBI:15378"/>
        <dbReference type="ChEBI" id="CHEBI:17562"/>
        <dbReference type="ChEBI" id="CHEBI:30616"/>
        <dbReference type="ChEBI" id="CHEBI:60377"/>
        <dbReference type="ChEBI" id="CHEBI:456216"/>
        <dbReference type="EC" id="2.7.1.48"/>
    </reaction>
</comment>
<comment type="pathway">
    <text evidence="2 3">Pyrimidine metabolism; CTP biosynthesis via salvage pathway; CTP from cytidine: step 1/3.</text>
</comment>
<comment type="pathway">
    <text evidence="2 3">Pyrimidine metabolism; UMP biosynthesis via salvage pathway; UMP from uridine: step 1/1.</text>
</comment>
<comment type="subunit">
    <text evidence="4 5">Homotetramer.</text>
</comment>
<comment type="interaction">
    <interactant intactId="EBI-1053938">
        <id>Q9BZX2</id>
    </interactant>
    <interactant intactId="EBI-1053938">
        <id>Q9BZX2</id>
        <label>UCK2</label>
    </interactant>
    <organismsDiffer>false</organismsDiffer>
    <experiments>3</experiments>
</comment>
<comment type="interaction">
    <interactant intactId="EBI-21013535">
        <id>Q9BZX2-1</id>
    </interactant>
    <interactant intactId="EBI-21013535">
        <id>Q9BZX2-1</id>
        <label>UCK2</label>
    </interactant>
    <organismsDiffer>false</organismsDiffer>
    <experiments>2</experiments>
</comment>
<comment type="alternative products">
    <event type="alternative splicing"/>
    <isoform>
        <id>Q9BZX2-1</id>
        <name>1</name>
        <sequence type="displayed"/>
    </isoform>
    <isoform>
        <id>Q9BZX2-2</id>
        <name>2</name>
        <sequence type="described" ref="VSP_014262"/>
    </isoform>
</comment>
<comment type="tissue specificity">
    <text evidence="6">According to PubMed:8812458; testis-specific. According to PubMed:11306702, placenta-specific.</text>
</comment>
<comment type="similarity">
    <text evidence="10">Belongs to the uridine kinase family.</text>
</comment>
<accession>Q9BZX2</accession>
<accession>Q5VV91</accession>
<accession>Q7KZV3</accession>
<accession>Q92528</accession>
<accession>Q96KG5</accession>
<accession>Q9BU42</accession>
<evidence type="ECO:0000256" key="1">
    <source>
        <dbReference type="SAM" id="MobiDB-lite"/>
    </source>
</evidence>
<evidence type="ECO:0000269" key="2">
    <source>
    </source>
</evidence>
<evidence type="ECO:0000269" key="3">
    <source>
    </source>
</evidence>
<evidence type="ECO:0000269" key="4">
    <source>
    </source>
</evidence>
<evidence type="ECO:0000269" key="5">
    <source>
    </source>
</evidence>
<evidence type="ECO:0000269" key="6">
    <source>
    </source>
</evidence>
<evidence type="ECO:0000303" key="7">
    <source>
    </source>
</evidence>
<evidence type="ECO:0000303" key="8">
    <source ref="3"/>
</evidence>
<evidence type="ECO:0000303" key="9">
    <source ref="4"/>
</evidence>
<evidence type="ECO:0000305" key="10"/>
<evidence type="ECO:0007744" key="11">
    <source>
    </source>
</evidence>
<evidence type="ECO:0007744" key="12">
    <source>
    </source>
</evidence>
<evidence type="ECO:0007829" key="13">
    <source>
        <dbReference type="PDB" id="1UJ2"/>
    </source>
</evidence>
<keyword id="KW-0002">3D-structure</keyword>
<keyword id="KW-0007">Acetylation</keyword>
<keyword id="KW-0025">Alternative splicing</keyword>
<keyword id="KW-0067">ATP-binding</keyword>
<keyword id="KW-0418">Kinase</keyword>
<keyword id="KW-0547">Nucleotide-binding</keyword>
<keyword id="KW-0597">Phosphoprotein</keyword>
<keyword id="KW-1267">Proteomics identification</keyword>
<keyword id="KW-1185">Reference proteome</keyword>
<keyword id="KW-0808">Transferase</keyword>
<organism>
    <name type="scientific">Homo sapiens</name>
    <name type="common">Human</name>
    <dbReference type="NCBI Taxonomy" id="9606"/>
    <lineage>
        <taxon>Eukaryota</taxon>
        <taxon>Metazoa</taxon>
        <taxon>Chordata</taxon>
        <taxon>Craniata</taxon>
        <taxon>Vertebrata</taxon>
        <taxon>Euteleostomi</taxon>
        <taxon>Mammalia</taxon>
        <taxon>Eutheria</taxon>
        <taxon>Euarchontoglires</taxon>
        <taxon>Primates</taxon>
        <taxon>Haplorrhini</taxon>
        <taxon>Catarrhini</taxon>
        <taxon>Hominidae</taxon>
        <taxon>Homo</taxon>
    </lineage>
</organism>
<dbReference type="EC" id="2.7.1.48" evidence="2 3"/>
<dbReference type="EMBL" id="D78335">
    <property type="protein sequence ID" value="BAA11349.1"/>
    <property type="molecule type" value="mRNA"/>
</dbReference>
<dbReference type="EMBL" id="AF236637">
    <property type="protein sequence ID" value="AAK14053.1"/>
    <property type="molecule type" value="mRNA"/>
</dbReference>
<dbReference type="EMBL" id="BT006860">
    <property type="protein sequence ID" value="AAP35506.1"/>
    <property type="molecule type" value="mRNA"/>
</dbReference>
<dbReference type="EMBL" id="CR456857">
    <property type="protein sequence ID" value="CAG33138.1"/>
    <property type="molecule type" value="mRNA"/>
</dbReference>
<dbReference type="EMBL" id="AL451074">
    <property type="status" value="NOT_ANNOTATED_CDS"/>
    <property type="molecule type" value="Genomic_DNA"/>
</dbReference>
<dbReference type="EMBL" id="AL358115">
    <property type="status" value="NOT_ANNOTATED_CDS"/>
    <property type="molecule type" value="Genomic_DNA"/>
</dbReference>
<dbReference type="EMBL" id="BC002906">
    <property type="protein sequence ID" value="AAH02906.2"/>
    <property type="molecule type" value="mRNA"/>
</dbReference>
<dbReference type="EMBL" id="AB062451">
    <property type="protein sequence ID" value="BAB56162.1"/>
    <property type="molecule type" value="mRNA"/>
</dbReference>
<dbReference type="CCDS" id="CCDS1252.1">
    <molecule id="Q9BZX2-1"/>
</dbReference>
<dbReference type="RefSeq" id="NP_036606.2">
    <molecule id="Q9BZX2-1"/>
    <property type="nucleotide sequence ID" value="NM_012474.4"/>
</dbReference>
<dbReference type="PDB" id="1UDW">
    <property type="method" value="X-ray"/>
    <property type="resolution" value="2.60 A"/>
    <property type="chains" value="A/B=1-250"/>
</dbReference>
<dbReference type="PDB" id="1UEI">
    <property type="method" value="X-ray"/>
    <property type="resolution" value="2.60 A"/>
    <property type="chains" value="A/B=1-250"/>
</dbReference>
<dbReference type="PDB" id="1UEJ">
    <property type="method" value="X-ray"/>
    <property type="resolution" value="2.61 A"/>
    <property type="chains" value="A/B=1-250"/>
</dbReference>
<dbReference type="PDB" id="1UFQ">
    <property type="method" value="X-ray"/>
    <property type="resolution" value="2.50 A"/>
    <property type="chains" value="A/B/C/D=1-250"/>
</dbReference>
<dbReference type="PDB" id="1UJ2">
    <property type="method" value="X-ray"/>
    <property type="resolution" value="1.80 A"/>
    <property type="chains" value="A/B=1-250"/>
</dbReference>
<dbReference type="PDB" id="1XRJ">
    <property type="method" value="X-ray"/>
    <property type="resolution" value="2.00 A"/>
    <property type="chains" value="A/B=1-261"/>
</dbReference>
<dbReference type="PDB" id="6N53">
    <property type="method" value="X-ray"/>
    <property type="resolution" value="2.70 A"/>
    <property type="chains" value="A/B=1-250"/>
</dbReference>
<dbReference type="PDB" id="6N54">
    <property type="method" value="X-ray"/>
    <property type="resolution" value="2.42 A"/>
    <property type="chains" value="A/B=1-250"/>
</dbReference>
<dbReference type="PDB" id="6N55">
    <property type="method" value="X-ray"/>
    <property type="resolution" value="3.08 A"/>
    <property type="chains" value="A/B/C/D/E/F/G/H=1-250"/>
</dbReference>
<dbReference type="PDB" id="6PWZ">
    <property type="method" value="X-ray"/>
    <property type="resolution" value="3.00 A"/>
    <property type="chains" value="A/B/C/D/E/F/G/H=1-250"/>
</dbReference>
<dbReference type="PDB" id="7SQL">
    <property type="method" value="X-ray"/>
    <property type="resolution" value="2.40 A"/>
    <property type="chains" value="A/B/C/D=1-250"/>
</dbReference>
<dbReference type="PDBsum" id="1UDW"/>
<dbReference type="PDBsum" id="1UEI"/>
<dbReference type="PDBsum" id="1UEJ"/>
<dbReference type="PDBsum" id="1UFQ"/>
<dbReference type="PDBsum" id="1UJ2"/>
<dbReference type="PDBsum" id="1XRJ"/>
<dbReference type="PDBsum" id="6N53"/>
<dbReference type="PDBsum" id="6N54"/>
<dbReference type="PDBsum" id="6N55"/>
<dbReference type="PDBsum" id="6PWZ"/>
<dbReference type="PDBsum" id="7SQL"/>
<dbReference type="SMR" id="Q9BZX2"/>
<dbReference type="BioGRID" id="113217">
    <property type="interactions" value="85"/>
</dbReference>
<dbReference type="FunCoup" id="Q9BZX2">
    <property type="interactions" value="286"/>
</dbReference>
<dbReference type="IntAct" id="Q9BZX2">
    <property type="interactions" value="33"/>
</dbReference>
<dbReference type="MINT" id="Q9BZX2"/>
<dbReference type="STRING" id="9606.ENSP00000356853"/>
<dbReference type="BindingDB" id="Q9BZX2"/>
<dbReference type="ChEMBL" id="CHEMBL2469"/>
<dbReference type="DrugBank" id="DB02097">
    <property type="generic name" value="Cytidine"/>
</dbReference>
<dbReference type="DrugBank" id="DB03403">
    <property type="generic name" value="Cytidine-5'-Monophosphate"/>
</dbReference>
<dbReference type="DrugBank" id="DB02431">
    <property type="generic name" value="Cytidine-5'-Triphosphate"/>
</dbReference>
<dbReference type="DrugBank" id="DB04005">
    <property type="generic name" value="Uridine 5'-triphosphate"/>
</dbReference>
<dbReference type="DrugCentral" id="Q9BZX2"/>
<dbReference type="GlyCosmos" id="Q9BZX2">
    <property type="glycosylation" value="1 site, 1 glycan"/>
</dbReference>
<dbReference type="GlyGen" id="Q9BZX2">
    <property type="glycosylation" value="1 site, 1 O-linked glycan (1 site)"/>
</dbReference>
<dbReference type="iPTMnet" id="Q9BZX2"/>
<dbReference type="PhosphoSitePlus" id="Q9BZX2"/>
<dbReference type="BioMuta" id="UCK2"/>
<dbReference type="DMDM" id="20455356"/>
<dbReference type="jPOST" id="Q9BZX2"/>
<dbReference type="MassIVE" id="Q9BZX2"/>
<dbReference type="PaxDb" id="9606-ENSP00000356853"/>
<dbReference type="PeptideAtlas" id="Q9BZX2"/>
<dbReference type="ProteomicsDB" id="79917">
    <molecule id="Q9BZX2-1"/>
</dbReference>
<dbReference type="ProteomicsDB" id="79918">
    <molecule id="Q9BZX2-2"/>
</dbReference>
<dbReference type="Pumba" id="Q9BZX2"/>
<dbReference type="Antibodypedia" id="34333">
    <property type="antibodies" value="204 antibodies from 27 providers"/>
</dbReference>
<dbReference type="DNASU" id="7371"/>
<dbReference type="Ensembl" id="ENST00000367879.9">
    <molecule id="Q9BZX2-1"/>
    <property type="protein sequence ID" value="ENSP00000356853.4"/>
    <property type="gene ID" value="ENSG00000143179.16"/>
</dbReference>
<dbReference type="Ensembl" id="ENST00000469256.6">
    <molecule id="Q9BZX2-2"/>
    <property type="protein sequence ID" value="ENSP00000476692.1"/>
    <property type="gene ID" value="ENSG00000143179.16"/>
</dbReference>
<dbReference type="Ensembl" id="ENST00000470820.1">
    <molecule id="Q9BZX2-2"/>
    <property type="protein sequence ID" value="ENSP00000476327.1"/>
    <property type="gene ID" value="ENSG00000143179.16"/>
</dbReference>
<dbReference type="GeneID" id="7371"/>
<dbReference type="KEGG" id="hsa:7371"/>
<dbReference type="MANE-Select" id="ENST00000367879.9">
    <property type="protein sequence ID" value="ENSP00000356853.4"/>
    <property type="RefSeq nucleotide sequence ID" value="NM_012474.5"/>
    <property type="RefSeq protein sequence ID" value="NP_036606.2"/>
</dbReference>
<dbReference type="UCSC" id="uc021pec.2">
    <molecule id="Q9BZX2-1"/>
    <property type="organism name" value="human"/>
</dbReference>
<dbReference type="AGR" id="HGNC:12562"/>
<dbReference type="CTD" id="7371"/>
<dbReference type="DisGeNET" id="7371"/>
<dbReference type="GeneCards" id="UCK2"/>
<dbReference type="HGNC" id="HGNC:12562">
    <property type="gene designation" value="UCK2"/>
</dbReference>
<dbReference type="HPA" id="ENSG00000143179">
    <property type="expression patterns" value="Low tissue specificity"/>
</dbReference>
<dbReference type="MIM" id="609329">
    <property type="type" value="gene"/>
</dbReference>
<dbReference type="neXtProt" id="NX_Q9BZX2"/>
<dbReference type="OpenTargets" id="ENSG00000143179"/>
<dbReference type="PharmGKB" id="PA362"/>
<dbReference type="VEuPathDB" id="HostDB:ENSG00000143179"/>
<dbReference type="eggNOG" id="KOG4203">
    <property type="taxonomic scope" value="Eukaryota"/>
</dbReference>
<dbReference type="GeneTree" id="ENSGT01020000230412"/>
<dbReference type="HOGENOM" id="CLU_021278_1_1_1"/>
<dbReference type="InParanoid" id="Q9BZX2"/>
<dbReference type="OMA" id="TVKPMHE"/>
<dbReference type="OrthoDB" id="10257085at2759"/>
<dbReference type="PAN-GO" id="Q9BZX2">
    <property type="GO annotations" value="2 GO annotations based on evolutionary models"/>
</dbReference>
<dbReference type="PhylomeDB" id="Q9BZX2"/>
<dbReference type="TreeFam" id="TF316686"/>
<dbReference type="BioCyc" id="MetaCyc:HS07003-MONOMER"/>
<dbReference type="BRENDA" id="2.7.1.48">
    <property type="organism ID" value="2681"/>
</dbReference>
<dbReference type="PathwayCommons" id="Q9BZX2"/>
<dbReference type="Reactome" id="R-HSA-73614">
    <property type="pathway name" value="Pyrimidine salvage"/>
</dbReference>
<dbReference type="SABIO-RK" id="Q9BZX2"/>
<dbReference type="SignaLink" id="Q9BZX2"/>
<dbReference type="SIGNOR" id="Q9BZX2"/>
<dbReference type="UniPathway" id="UPA00574">
    <property type="reaction ID" value="UER00637"/>
</dbReference>
<dbReference type="UniPathway" id="UPA00579">
    <property type="reaction ID" value="UER00640"/>
</dbReference>
<dbReference type="BioGRID-ORCS" id="7371">
    <property type="hits" value="22 hits in 1163 CRISPR screens"/>
</dbReference>
<dbReference type="ChiTaRS" id="UCK2">
    <property type="organism name" value="human"/>
</dbReference>
<dbReference type="EvolutionaryTrace" id="Q9BZX2"/>
<dbReference type="GeneWiki" id="UCK2"/>
<dbReference type="GenomeRNAi" id="7371"/>
<dbReference type="Pharos" id="Q9BZX2">
    <property type="development level" value="Tbio"/>
</dbReference>
<dbReference type="PRO" id="PR:Q9BZX2"/>
<dbReference type="Proteomes" id="UP000005640">
    <property type="component" value="Chromosome 1"/>
</dbReference>
<dbReference type="RNAct" id="Q9BZX2">
    <property type="molecule type" value="protein"/>
</dbReference>
<dbReference type="Bgee" id="ENSG00000143179">
    <property type="expression patterns" value="Expressed in mucosa of transverse colon and 157 other cell types or tissues"/>
</dbReference>
<dbReference type="ExpressionAtlas" id="Q9BZX2">
    <property type="expression patterns" value="baseline and differential"/>
</dbReference>
<dbReference type="GO" id="GO:0005737">
    <property type="term" value="C:cytoplasm"/>
    <property type="evidence" value="ECO:0000318"/>
    <property type="project" value="GO_Central"/>
</dbReference>
<dbReference type="GO" id="GO:0005829">
    <property type="term" value="C:cytosol"/>
    <property type="evidence" value="ECO:0000304"/>
    <property type="project" value="Reactome"/>
</dbReference>
<dbReference type="GO" id="GO:0005524">
    <property type="term" value="F:ATP binding"/>
    <property type="evidence" value="ECO:0007669"/>
    <property type="project" value="UniProtKB-KW"/>
</dbReference>
<dbReference type="GO" id="GO:0043771">
    <property type="term" value="F:cytidine kinase activity"/>
    <property type="evidence" value="ECO:0000314"/>
    <property type="project" value="UniProtKB"/>
</dbReference>
<dbReference type="GO" id="GO:0042802">
    <property type="term" value="F:identical protein binding"/>
    <property type="evidence" value="ECO:0000353"/>
    <property type="project" value="IntAct"/>
</dbReference>
<dbReference type="GO" id="GO:0004849">
    <property type="term" value="F:uridine kinase activity"/>
    <property type="evidence" value="ECO:0000314"/>
    <property type="project" value="UniProtKB"/>
</dbReference>
<dbReference type="GO" id="GO:0071453">
    <property type="term" value="P:cellular response to oxygen levels"/>
    <property type="evidence" value="ECO:0007669"/>
    <property type="project" value="Ensembl"/>
</dbReference>
<dbReference type="GO" id="GO:0044211">
    <property type="term" value="P:CTP salvage"/>
    <property type="evidence" value="ECO:0000314"/>
    <property type="project" value="UniProtKB"/>
</dbReference>
<dbReference type="GO" id="GO:0007631">
    <property type="term" value="P:feeding behavior"/>
    <property type="evidence" value="ECO:0007669"/>
    <property type="project" value="Ensembl"/>
</dbReference>
<dbReference type="GO" id="GO:0048678">
    <property type="term" value="P:response to axon injury"/>
    <property type="evidence" value="ECO:0007669"/>
    <property type="project" value="Ensembl"/>
</dbReference>
<dbReference type="GO" id="GO:0044206">
    <property type="term" value="P:UMP salvage"/>
    <property type="evidence" value="ECO:0000314"/>
    <property type="project" value="UniProtKB"/>
</dbReference>
<dbReference type="CDD" id="cd02023">
    <property type="entry name" value="UMPK"/>
    <property type="match status" value="1"/>
</dbReference>
<dbReference type="FunFam" id="3.40.50.300:FF:000297">
    <property type="entry name" value="Uridine-cytidine kinase 2"/>
    <property type="match status" value="1"/>
</dbReference>
<dbReference type="Gene3D" id="3.40.50.300">
    <property type="entry name" value="P-loop containing nucleotide triphosphate hydrolases"/>
    <property type="match status" value="1"/>
</dbReference>
<dbReference type="InterPro" id="IPR027417">
    <property type="entry name" value="P-loop_NTPase"/>
</dbReference>
<dbReference type="InterPro" id="IPR006083">
    <property type="entry name" value="PRK/URK"/>
</dbReference>
<dbReference type="InterPro" id="IPR000764">
    <property type="entry name" value="Uridine_kinase-like"/>
</dbReference>
<dbReference type="NCBIfam" id="NF004018">
    <property type="entry name" value="PRK05480.1"/>
    <property type="match status" value="1"/>
</dbReference>
<dbReference type="NCBIfam" id="TIGR00235">
    <property type="entry name" value="udk"/>
    <property type="match status" value="1"/>
</dbReference>
<dbReference type="PANTHER" id="PTHR10285">
    <property type="entry name" value="URIDINE KINASE"/>
    <property type="match status" value="1"/>
</dbReference>
<dbReference type="Pfam" id="PF00485">
    <property type="entry name" value="PRK"/>
    <property type="match status" value="1"/>
</dbReference>
<dbReference type="PRINTS" id="PR00988">
    <property type="entry name" value="URIDINKINASE"/>
</dbReference>
<dbReference type="SUPFAM" id="SSF52540">
    <property type="entry name" value="P-loop containing nucleoside triphosphate hydrolases"/>
    <property type="match status" value="1"/>
</dbReference>
<sequence>MAGDSEQTLQNHQQPNGGEPFLIGVSGGTASGKSSVCAKIVQLLGQNEVDYRQKQVVILSQDSFYRVLTSEQKAKALKGQFNFDHPDAFDNELILKTLKEITEGKTVQIPVYDFVSHSRKEETVTVYPADVVLFEGILAFYSQEVRDLFQMKLFVDTDADTRLSRRVLRDISERGRDLEQILSQYITFVKPAFEEFCLPTKKYADVIIPRGADNLVAINLIVQHIQDILNGGPSKRQTNGCLNGYTPSRKRQASESSSRPH</sequence>
<protein>
    <recommendedName>
        <fullName>Uridine-cytidine kinase 2</fullName>
        <shortName>UCK 2</shortName>
        <ecNumber evidence="2 3">2.7.1.48</ecNumber>
    </recommendedName>
    <alternativeName>
        <fullName>Cytidine monophosphokinase 2</fullName>
    </alternativeName>
    <alternativeName>
        <fullName>Testis-specific protein TSA903</fullName>
    </alternativeName>
    <alternativeName>
        <fullName>Uridine monophosphokinase 2</fullName>
    </alternativeName>
</protein>
<feature type="initiator methionine" description="Removed" evidence="11">
    <location>
        <position position="1"/>
    </location>
</feature>
<feature type="chain" id="PRO_0000164455" description="Uridine-cytidine kinase 2">
    <location>
        <begin position="2"/>
        <end position="261"/>
    </location>
</feature>
<feature type="region of interest" description="Disordered" evidence="1">
    <location>
        <begin position="1"/>
        <end position="24"/>
    </location>
</feature>
<feature type="region of interest" description="Disordered" evidence="1">
    <location>
        <begin position="236"/>
        <end position="261"/>
    </location>
</feature>
<feature type="compositionally biased region" description="Polar residues" evidence="1">
    <location>
        <begin position="1"/>
        <end position="16"/>
    </location>
</feature>
<feature type="binding site" evidence="4 5">
    <location>
        <begin position="27"/>
        <end position="35"/>
    </location>
    <ligand>
        <name>ATP</name>
        <dbReference type="ChEBI" id="CHEBI:30616"/>
    </ligand>
</feature>
<feature type="binding site" evidence="4 5">
    <location>
        <position position="84"/>
    </location>
    <ligand>
        <name>substrate</name>
    </ligand>
</feature>
<feature type="binding site" evidence="4 5">
    <location>
        <position position="112"/>
    </location>
    <ligand>
        <name>substrate</name>
    </ligand>
</feature>
<feature type="binding site" evidence="4 5">
    <location>
        <position position="117"/>
    </location>
    <ligand>
        <name>substrate</name>
    </ligand>
</feature>
<feature type="binding site" evidence="4 5">
    <location>
        <position position="166"/>
    </location>
    <ligand>
        <name>substrate</name>
    </ligand>
</feature>
<feature type="binding site" evidence="4 5">
    <location>
        <position position="176"/>
    </location>
    <ligand>
        <name>substrate</name>
    </ligand>
</feature>
<feature type="binding site" evidence="4 5">
    <location>
        <position position="184"/>
    </location>
    <ligand>
        <name>substrate</name>
    </ligand>
</feature>
<feature type="binding site" evidence="4 5">
    <location>
        <position position="213"/>
    </location>
    <ligand>
        <name>ATP</name>
        <dbReference type="ChEBI" id="CHEBI:30616"/>
    </ligand>
</feature>
<feature type="modified residue" description="N-acetylalanine" evidence="11">
    <location>
        <position position="2"/>
    </location>
</feature>
<feature type="modified residue" description="Phosphoserine" evidence="12">
    <location>
        <position position="254"/>
    </location>
</feature>
<feature type="splice variant" id="VSP_014262" description="In isoform 2." evidence="7 8 9">
    <location>
        <begin position="1"/>
        <end position="150"/>
    </location>
</feature>
<feature type="sequence conflict" description="In Ref. 1; BAA11349." evidence="10" ref="1">
    <original>K</original>
    <variation>Q</variation>
    <location>
        <position position="202"/>
    </location>
</feature>
<feature type="sequence conflict" description="In Ref. 1; BAA11349." evidence="10" ref="1">
    <original>V</original>
    <variation>E</variation>
    <location>
        <position position="222"/>
    </location>
</feature>
<feature type="strand" evidence="13">
    <location>
        <begin position="21"/>
        <end position="26"/>
    </location>
</feature>
<feature type="helix" evidence="13">
    <location>
        <begin position="33"/>
        <end position="43"/>
    </location>
</feature>
<feature type="helix" evidence="13">
    <location>
        <begin position="46"/>
        <end position="48"/>
    </location>
</feature>
<feature type="helix" evidence="13">
    <location>
        <begin position="51"/>
        <end position="53"/>
    </location>
</feature>
<feature type="strand" evidence="13">
    <location>
        <begin position="55"/>
        <end position="60"/>
    </location>
</feature>
<feature type="helix" evidence="13">
    <location>
        <begin position="61"/>
        <end position="64"/>
    </location>
</feature>
<feature type="helix" evidence="13">
    <location>
        <begin position="70"/>
        <end position="77"/>
    </location>
</feature>
<feature type="helix" evidence="13">
    <location>
        <begin position="86"/>
        <end position="88"/>
    </location>
</feature>
<feature type="helix" evidence="13">
    <location>
        <begin position="91"/>
        <end position="102"/>
    </location>
</feature>
<feature type="strand" evidence="13">
    <location>
        <begin position="107"/>
        <end position="113"/>
    </location>
</feature>
<feature type="turn" evidence="13">
    <location>
        <begin position="114"/>
        <end position="117"/>
    </location>
</feature>
<feature type="strand" evidence="13">
    <location>
        <begin position="118"/>
        <end position="126"/>
    </location>
</feature>
<feature type="strand" evidence="13">
    <location>
        <begin position="130"/>
        <end position="135"/>
    </location>
</feature>
<feature type="turn" evidence="13">
    <location>
        <begin position="137"/>
        <end position="140"/>
    </location>
</feature>
<feature type="helix" evidence="13">
    <location>
        <begin position="143"/>
        <end position="148"/>
    </location>
</feature>
<feature type="strand" evidence="13">
    <location>
        <begin position="150"/>
        <end position="156"/>
    </location>
</feature>
<feature type="helix" evidence="13">
    <location>
        <begin position="159"/>
        <end position="173"/>
    </location>
</feature>
<feature type="helix" evidence="13">
    <location>
        <begin position="178"/>
        <end position="187"/>
    </location>
</feature>
<feature type="helix" evidence="13">
    <location>
        <begin position="189"/>
        <end position="196"/>
    </location>
</feature>
<feature type="helix" evidence="13">
    <location>
        <begin position="198"/>
        <end position="203"/>
    </location>
</feature>
<feature type="strand" evidence="13">
    <location>
        <begin position="205"/>
        <end position="209"/>
    </location>
</feature>
<feature type="helix" evidence="13">
    <location>
        <begin position="211"/>
        <end position="213"/>
    </location>
</feature>
<feature type="helix" evidence="13">
    <location>
        <begin position="215"/>
        <end position="230"/>
    </location>
</feature>
<name>UCK2_HUMAN</name>
<reference key="1">
    <citation type="journal article" date="1996" name="Genomics">
        <title>Isolation of three testis-specific genes (TSA303, TSA806, TSA903) by a differential mRNA display method.</title>
        <authorList>
            <person name="Ozaki K."/>
            <person name="Kuroki T."/>
            <person name="Hayashi S."/>
            <person name="Nakamura Y."/>
        </authorList>
    </citation>
    <scope>NUCLEOTIDE SEQUENCE [MRNA] (ISOFORM 2)</scope>
    <scope>TISSUE SPECIFICITY</scope>
</reference>
<reference key="2">
    <citation type="journal article" date="2001" name="Mol. Pharmacol.">
        <title>Phosphorylation of uridine and cytidine nucleoside analogs by two human uridine-cytidine kinases.</title>
        <authorList>
            <person name="Van Rompay A.R."/>
            <person name="Norda A."/>
            <person name="Linden K."/>
            <person name="Johansson M."/>
            <person name="Karlsson A."/>
        </authorList>
    </citation>
    <scope>NUCLEOTIDE SEQUENCE [MRNA] (ISOFORM 1)</scope>
    <scope>FUNCTION</scope>
    <scope>CATALYTIC ACTIVITY</scope>
    <scope>PATHWAY</scope>
</reference>
<reference key="3">
    <citation type="submission" date="2003-05" db="EMBL/GenBank/DDBJ databases">
        <title>Cloning of human full-length CDSs in BD Creator(TM) system donor vector.</title>
        <authorList>
            <person name="Kalnine N."/>
            <person name="Chen X."/>
            <person name="Rolfs A."/>
            <person name="Halleck A."/>
            <person name="Hines L."/>
            <person name="Eisenstein S."/>
            <person name="Koundinya M."/>
            <person name="Raphael J."/>
            <person name="Moreira D."/>
            <person name="Kelley T."/>
            <person name="LaBaer J."/>
            <person name="Lin Y."/>
            <person name="Phelan M."/>
            <person name="Farmer A."/>
        </authorList>
    </citation>
    <scope>NUCLEOTIDE SEQUENCE [LARGE SCALE MRNA] (ISOFORM 2)</scope>
</reference>
<reference key="4">
    <citation type="submission" date="2004-06" db="EMBL/GenBank/DDBJ databases">
        <title>Cloning of human full open reading frames in Gateway(TM) system entry vector (pDONR201).</title>
        <authorList>
            <person name="Ebert L."/>
            <person name="Schick M."/>
            <person name="Neubert P."/>
            <person name="Schatten R."/>
            <person name="Henze S."/>
            <person name="Korn B."/>
        </authorList>
    </citation>
    <scope>NUCLEOTIDE SEQUENCE [LARGE SCALE MRNA] (ISOFORM 2)</scope>
</reference>
<reference key="5">
    <citation type="journal article" date="2006" name="Nature">
        <title>The DNA sequence and biological annotation of human chromosome 1.</title>
        <authorList>
            <person name="Gregory S.G."/>
            <person name="Barlow K.F."/>
            <person name="McLay K.E."/>
            <person name="Kaul R."/>
            <person name="Swarbreck D."/>
            <person name="Dunham A."/>
            <person name="Scott C.E."/>
            <person name="Howe K.L."/>
            <person name="Woodfine K."/>
            <person name="Spencer C.C.A."/>
            <person name="Jones M.C."/>
            <person name="Gillson C."/>
            <person name="Searle S."/>
            <person name="Zhou Y."/>
            <person name="Kokocinski F."/>
            <person name="McDonald L."/>
            <person name="Evans R."/>
            <person name="Phillips K."/>
            <person name="Atkinson A."/>
            <person name="Cooper R."/>
            <person name="Jones C."/>
            <person name="Hall R.E."/>
            <person name="Andrews T.D."/>
            <person name="Lloyd C."/>
            <person name="Ainscough R."/>
            <person name="Almeida J.P."/>
            <person name="Ambrose K.D."/>
            <person name="Anderson F."/>
            <person name="Andrew R.W."/>
            <person name="Ashwell R.I.S."/>
            <person name="Aubin K."/>
            <person name="Babbage A.K."/>
            <person name="Bagguley C.L."/>
            <person name="Bailey J."/>
            <person name="Beasley H."/>
            <person name="Bethel G."/>
            <person name="Bird C.P."/>
            <person name="Bray-Allen S."/>
            <person name="Brown J.Y."/>
            <person name="Brown A.J."/>
            <person name="Buckley D."/>
            <person name="Burton J."/>
            <person name="Bye J."/>
            <person name="Carder C."/>
            <person name="Chapman J.C."/>
            <person name="Clark S.Y."/>
            <person name="Clarke G."/>
            <person name="Clee C."/>
            <person name="Cobley V."/>
            <person name="Collier R.E."/>
            <person name="Corby N."/>
            <person name="Coville G.J."/>
            <person name="Davies J."/>
            <person name="Deadman R."/>
            <person name="Dunn M."/>
            <person name="Earthrowl M."/>
            <person name="Ellington A.G."/>
            <person name="Errington H."/>
            <person name="Frankish A."/>
            <person name="Frankland J."/>
            <person name="French L."/>
            <person name="Garner P."/>
            <person name="Garnett J."/>
            <person name="Gay L."/>
            <person name="Ghori M.R.J."/>
            <person name="Gibson R."/>
            <person name="Gilby L.M."/>
            <person name="Gillett W."/>
            <person name="Glithero R.J."/>
            <person name="Grafham D.V."/>
            <person name="Griffiths C."/>
            <person name="Griffiths-Jones S."/>
            <person name="Grocock R."/>
            <person name="Hammond S."/>
            <person name="Harrison E.S.I."/>
            <person name="Hart E."/>
            <person name="Haugen E."/>
            <person name="Heath P.D."/>
            <person name="Holmes S."/>
            <person name="Holt K."/>
            <person name="Howden P.J."/>
            <person name="Hunt A.R."/>
            <person name="Hunt S.E."/>
            <person name="Hunter G."/>
            <person name="Isherwood J."/>
            <person name="James R."/>
            <person name="Johnson C."/>
            <person name="Johnson D."/>
            <person name="Joy A."/>
            <person name="Kay M."/>
            <person name="Kershaw J.K."/>
            <person name="Kibukawa M."/>
            <person name="Kimberley A.M."/>
            <person name="King A."/>
            <person name="Knights A.J."/>
            <person name="Lad H."/>
            <person name="Laird G."/>
            <person name="Lawlor S."/>
            <person name="Leongamornlert D.A."/>
            <person name="Lloyd D.M."/>
            <person name="Loveland J."/>
            <person name="Lovell J."/>
            <person name="Lush M.J."/>
            <person name="Lyne R."/>
            <person name="Martin S."/>
            <person name="Mashreghi-Mohammadi M."/>
            <person name="Matthews L."/>
            <person name="Matthews N.S.W."/>
            <person name="McLaren S."/>
            <person name="Milne S."/>
            <person name="Mistry S."/>
            <person name="Moore M.J.F."/>
            <person name="Nickerson T."/>
            <person name="O'Dell C.N."/>
            <person name="Oliver K."/>
            <person name="Palmeiri A."/>
            <person name="Palmer S.A."/>
            <person name="Parker A."/>
            <person name="Patel D."/>
            <person name="Pearce A.V."/>
            <person name="Peck A.I."/>
            <person name="Pelan S."/>
            <person name="Phelps K."/>
            <person name="Phillimore B.J."/>
            <person name="Plumb R."/>
            <person name="Rajan J."/>
            <person name="Raymond C."/>
            <person name="Rouse G."/>
            <person name="Saenphimmachak C."/>
            <person name="Sehra H.K."/>
            <person name="Sheridan E."/>
            <person name="Shownkeen R."/>
            <person name="Sims S."/>
            <person name="Skuce C.D."/>
            <person name="Smith M."/>
            <person name="Steward C."/>
            <person name="Subramanian S."/>
            <person name="Sycamore N."/>
            <person name="Tracey A."/>
            <person name="Tromans A."/>
            <person name="Van Helmond Z."/>
            <person name="Wall M."/>
            <person name="Wallis J.M."/>
            <person name="White S."/>
            <person name="Whitehead S.L."/>
            <person name="Wilkinson J.E."/>
            <person name="Willey D.L."/>
            <person name="Williams H."/>
            <person name="Wilming L."/>
            <person name="Wray P.W."/>
            <person name="Wu Z."/>
            <person name="Coulson A."/>
            <person name="Vaudin M."/>
            <person name="Sulston J.E."/>
            <person name="Durbin R.M."/>
            <person name="Hubbard T."/>
            <person name="Wooster R."/>
            <person name="Dunham I."/>
            <person name="Carter N.P."/>
            <person name="McVean G."/>
            <person name="Ross M.T."/>
            <person name="Harrow J."/>
            <person name="Olson M.V."/>
            <person name="Beck S."/>
            <person name="Rogers J."/>
            <person name="Bentley D.R."/>
        </authorList>
    </citation>
    <scope>NUCLEOTIDE SEQUENCE [LARGE SCALE GENOMIC DNA]</scope>
</reference>
<reference key="6">
    <citation type="journal article" date="2004" name="Genome Res.">
        <title>The status, quality, and expansion of the NIH full-length cDNA project: the Mammalian Gene Collection (MGC).</title>
        <authorList>
            <consortium name="The MGC Project Team"/>
        </authorList>
    </citation>
    <scope>NUCLEOTIDE SEQUENCE [LARGE SCALE MRNA] (ISOFORM 1)</scope>
    <source>
        <tissue>Lung</tissue>
    </source>
</reference>
<reference key="7">
    <citation type="journal article" date="2001" name="Int. J. Mol. Med.">
        <title>Cloning and expression of uridine/cytidine kinase cDNA from human fibrosarcoma cells.</title>
        <authorList>
            <person name="Koizumi K."/>
            <person name="Shimamoto Y."/>
            <person name="Azuma A."/>
            <person name="Wataya Y."/>
            <person name="Matsuda A."/>
            <person name="Sasaki T."/>
            <person name="Fukushima M."/>
        </authorList>
    </citation>
    <scope>NUCLEOTIDE SEQUENCE [MRNA] OF 15-261 (ISOFORM 1)</scope>
    <scope>FUNCTION</scope>
    <scope>CATALYTIC ACTIVITY</scope>
    <scope>PATHWAY</scope>
    <source>
        <tissue>Fibrosarcoma</tissue>
    </source>
</reference>
<reference key="8">
    <citation type="journal article" date="2008" name="Mol. Cell">
        <title>Kinase-selective enrichment enables quantitative phosphoproteomics of the kinome across the cell cycle.</title>
        <authorList>
            <person name="Daub H."/>
            <person name="Olsen J.V."/>
            <person name="Bairlein M."/>
            <person name="Gnad F."/>
            <person name="Oppermann F.S."/>
            <person name="Korner R."/>
            <person name="Greff Z."/>
            <person name="Keri G."/>
            <person name="Stemmann O."/>
            <person name="Mann M."/>
        </authorList>
    </citation>
    <scope>IDENTIFICATION BY MASS SPECTROMETRY [LARGE SCALE ANALYSIS]</scope>
    <source>
        <tissue>Cervix carcinoma</tissue>
    </source>
</reference>
<reference key="9">
    <citation type="journal article" date="2009" name="Anal. Chem.">
        <title>Lys-N and trypsin cover complementary parts of the phosphoproteome in a refined SCX-based approach.</title>
        <authorList>
            <person name="Gauci S."/>
            <person name="Helbig A.O."/>
            <person name="Slijper M."/>
            <person name="Krijgsveld J."/>
            <person name="Heck A.J."/>
            <person name="Mohammed S."/>
        </authorList>
    </citation>
    <scope>ACETYLATION [LARGE SCALE ANALYSIS] AT ALA-2</scope>
    <scope>CLEAVAGE OF INITIATOR METHIONINE [LARGE SCALE ANALYSIS]</scope>
    <scope>IDENTIFICATION BY MASS SPECTROMETRY [LARGE SCALE ANALYSIS]</scope>
</reference>
<reference key="10">
    <citation type="journal article" date="2011" name="BMC Syst. Biol.">
        <title>Initial characterization of the human central proteome.</title>
        <authorList>
            <person name="Burkard T.R."/>
            <person name="Planyavsky M."/>
            <person name="Kaupe I."/>
            <person name="Breitwieser F.P."/>
            <person name="Buerckstuemmer T."/>
            <person name="Bennett K.L."/>
            <person name="Superti-Furga G."/>
            <person name="Colinge J."/>
        </authorList>
    </citation>
    <scope>IDENTIFICATION BY MASS SPECTROMETRY [LARGE SCALE ANALYSIS]</scope>
</reference>
<reference key="11">
    <citation type="journal article" date="2011" name="Sci. Signal.">
        <title>System-wide temporal characterization of the proteome and phosphoproteome of human embryonic stem cell differentiation.</title>
        <authorList>
            <person name="Rigbolt K.T."/>
            <person name="Prokhorova T.A."/>
            <person name="Akimov V."/>
            <person name="Henningsen J."/>
            <person name="Johansen P.T."/>
            <person name="Kratchmarova I."/>
            <person name="Kassem M."/>
            <person name="Mann M."/>
            <person name="Olsen J.V."/>
            <person name="Blagoev B."/>
        </authorList>
    </citation>
    <scope>PHOSPHORYLATION [LARGE SCALE ANALYSIS] AT SER-254</scope>
    <scope>IDENTIFICATION BY MASS SPECTROMETRY [LARGE SCALE ANALYSIS]</scope>
</reference>
<reference key="12">
    <citation type="journal article" date="2004" name="Structure">
        <title>Structural basis for the specificity, catalysis, and regulation of human uridine-cytidine kinase.</title>
        <authorList>
            <person name="Suzuki N.N."/>
            <person name="Koizumi K."/>
            <person name="Fukushima M."/>
            <person name="Matsuda A."/>
            <person name="Inagaki F."/>
        </authorList>
    </citation>
    <scope>X-RAY CRYSTALLOGRAPHY (2.6 ANGSTROMS) OF 1-250 IN COMPLEXES WITH ADP; CYTIDINE; CMP; CTP AND UTP</scope>
    <scope>SUBUNIT</scope>
</reference>
<reference key="13">
    <citation type="journal article" date="2005" name="Acta Crystallogr. D">
        <title>Structure of human uridine-cytidine kinase 2 determined by SIRAS using a rotating-anode X-ray generator and a single samarium derivative.</title>
        <authorList>
            <person name="Appleby T.C."/>
            <person name="Larson G."/>
            <person name="Cheney I.W."/>
            <person name="Walker H."/>
            <person name="Wu J.Z."/>
            <person name="Zhong W."/>
            <person name="Hong Z."/>
            <person name="Yao N."/>
        </authorList>
    </citation>
    <scope>X-RAY CRYSTALLOGRAPHY (2.0 ANGSTROMS) IN COMPLEX WITH ADP AND CMP</scope>
    <scope>SUBUNIT</scope>
</reference>
<gene>
    <name type="primary">UCK2</name>
    <name type="synonym">UMPK</name>
</gene>